<dbReference type="EMBL" id="AE005176">
    <property type="protein sequence ID" value="AAK04600.1"/>
    <property type="molecule type" value="Genomic_DNA"/>
</dbReference>
<dbReference type="PIR" id="F86687">
    <property type="entry name" value="F86687"/>
</dbReference>
<dbReference type="RefSeq" id="NP_266658.1">
    <property type="nucleotide sequence ID" value="NC_002662.1"/>
</dbReference>
<dbReference type="RefSeq" id="WP_010905402.1">
    <property type="nucleotide sequence ID" value="NC_002662.1"/>
</dbReference>
<dbReference type="PDB" id="5LVT">
    <property type="method" value="X-ray"/>
    <property type="resolution" value="2.10 A"/>
    <property type="chains" value="A/B/C/D=1-91"/>
</dbReference>
<dbReference type="PDBsum" id="5LVT"/>
<dbReference type="SMR" id="Q9CI64"/>
<dbReference type="PaxDb" id="272623-L102317"/>
<dbReference type="EnsemblBacteria" id="AAK04600">
    <property type="protein sequence ID" value="AAK04600"/>
    <property type="gene ID" value="L102317"/>
</dbReference>
<dbReference type="KEGG" id="lla:L102317"/>
<dbReference type="PATRIC" id="fig|272623.7.peg.545"/>
<dbReference type="eggNOG" id="COG0776">
    <property type="taxonomic scope" value="Bacteria"/>
</dbReference>
<dbReference type="HOGENOM" id="CLU_105066_3_1_9"/>
<dbReference type="OrthoDB" id="9799835at2"/>
<dbReference type="Proteomes" id="UP000002196">
    <property type="component" value="Chromosome"/>
</dbReference>
<dbReference type="GO" id="GO:0005829">
    <property type="term" value="C:cytosol"/>
    <property type="evidence" value="ECO:0007669"/>
    <property type="project" value="TreeGrafter"/>
</dbReference>
<dbReference type="GO" id="GO:0003677">
    <property type="term" value="F:DNA binding"/>
    <property type="evidence" value="ECO:0007669"/>
    <property type="project" value="UniProtKB-KW"/>
</dbReference>
<dbReference type="GO" id="GO:0030527">
    <property type="term" value="F:structural constituent of chromatin"/>
    <property type="evidence" value="ECO:0007669"/>
    <property type="project" value="InterPro"/>
</dbReference>
<dbReference type="GO" id="GO:0030261">
    <property type="term" value="P:chromosome condensation"/>
    <property type="evidence" value="ECO:0007669"/>
    <property type="project" value="UniProtKB-KW"/>
</dbReference>
<dbReference type="CDD" id="cd13831">
    <property type="entry name" value="HU"/>
    <property type="match status" value="1"/>
</dbReference>
<dbReference type="FunFam" id="4.10.520.10:FF:000001">
    <property type="entry name" value="DNA-binding protein HU"/>
    <property type="match status" value="1"/>
</dbReference>
<dbReference type="Gene3D" id="4.10.520.10">
    <property type="entry name" value="IHF-like DNA-binding proteins"/>
    <property type="match status" value="1"/>
</dbReference>
<dbReference type="InterPro" id="IPR000119">
    <property type="entry name" value="Hist_DNA-bd"/>
</dbReference>
<dbReference type="InterPro" id="IPR020816">
    <property type="entry name" value="Histone-like_DNA-bd_CS"/>
</dbReference>
<dbReference type="InterPro" id="IPR010992">
    <property type="entry name" value="IHF-like_DNA-bd_dom_sf"/>
</dbReference>
<dbReference type="PANTHER" id="PTHR33175">
    <property type="entry name" value="DNA-BINDING PROTEIN HU"/>
    <property type="match status" value="1"/>
</dbReference>
<dbReference type="PANTHER" id="PTHR33175:SF3">
    <property type="entry name" value="DNA-BINDING PROTEIN HU-BETA"/>
    <property type="match status" value="1"/>
</dbReference>
<dbReference type="Pfam" id="PF00216">
    <property type="entry name" value="Bac_DNA_binding"/>
    <property type="match status" value="1"/>
</dbReference>
<dbReference type="PRINTS" id="PR01727">
    <property type="entry name" value="DNABINDINGHU"/>
</dbReference>
<dbReference type="SMART" id="SM00411">
    <property type="entry name" value="BHL"/>
    <property type="match status" value="1"/>
</dbReference>
<dbReference type="SUPFAM" id="SSF47729">
    <property type="entry name" value="IHF-like DNA-binding proteins"/>
    <property type="match status" value="1"/>
</dbReference>
<dbReference type="PROSITE" id="PS00045">
    <property type="entry name" value="HISTONE_LIKE"/>
    <property type="match status" value="1"/>
</dbReference>
<feature type="chain" id="PRO_0000104946" description="DNA-binding protein HU">
    <location>
        <begin position="1"/>
        <end position="91"/>
    </location>
</feature>
<feature type="helix" evidence="3">
    <location>
        <begin position="4"/>
        <end position="15"/>
    </location>
</feature>
<feature type="helix" evidence="3">
    <location>
        <begin position="19"/>
        <end position="38"/>
    </location>
</feature>
<feature type="strand" evidence="3">
    <location>
        <begin position="43"/>
        <end position="45"/>
    </location>
</feature>
<feature type="turn" evidence="3">
    <location>
        <begin position="46"/>
        <end position="48"/>
    </location>
</feature>
<feature type="strand" evidence="3">
    <location>
        <begin position="49"/>
        <end position="56"/>
    </location>
</feature>
<feature type="strand" evidence="3">
    <location>
        <begin position="59"/>
        <end position="62"/>
    </location>
</feature>
<feature type="turn" evidence="3">
    <location>
        <begin position="64"/>
        <end position="66"/>
    </location>
</feature>
<feature type="strand" evidence="3">
    <location>
        <begin position="69"/>
        <end position="72"/>
    </location>
</feature>
<feature type="strand" evidence="3">
    <location>
        <begin position="75"/>
        <end position="82"/>
    </location>
</feature>
<feature type="helix" evidence="3">
    <location>
        <begin position="84"/>
        <end position="90"/>
    </location>
</feature>
<proteinExistence type="evidence at protein level"/>
<organism>
    <name type="scientific">Lactococcus lactis subsp. lactis (strain IL1403)</name>
    <name type="common">Streptococcus lactis</name>
    <dbReference type="NCBI Taxonomy" id="272623"/>
    <lineage>
        <taxon>Bacteria</taxon>
        <taxon>Bacillati</taxon>
        <taxon>Bacillota</taxon>
        <taxon>Bacilli</taxon>
        <taxon>Lactobacillales</taxon>
        <taxon>Streptococcaceae</taxon>
        <taxon>Lactococcus</taxon>
    </lineage>
</organism>
<comment type="function">
    <text evidence="1">Histone-like DNA-binding protein which is capable of wrapping DNA to stabilize it, and thus to prevent its denaturation under extreme environmental conditions.</text>
</comment>
<comment type="subunit">
    <text evidence="1">Homodimer.</text>
</comment>
<comment type="similarity">
    <text evidence="2">Belongs to the bacterial histone-like protein family.</text>
</comment>
<protein>
    <recommendedName>
        <fullName>DNA-binding protein HU</fullName>
    </recommendedName>
</protein>
<accession>Q9CI64</accession>
<evidence type="ECO:0000250" key="1"/>
<evidence type="ECO:0000305" key="2"/>
<evidence type="ECO:0007829" key="3">
    <source>
        <dbReference type="PDB" id="5LVT"/>
    </source>
</evidence>
<sequence>MANKQDLIAEVAAKTGLTKKDSEKAVNAFGEVVTEFLAKGEKVQLIGFGTFETRERAAREGRNPQTGEAIKIAATVVPAFKAGKALKDAVK</sequence>
<reference key="1">
    <citation type="journal article" date="2001" name="Genome Res.">
        <title>The complete genome sequence of the lactic acid bacterium Lactococcus lactis ssp. lactis IL1403.</title>
        <authorList>
            <person name="Bolotin A."/>
            <person name="Wincker P."/>
            <person name="Mauger S."/>
            <person name="Jaillon O."/>
            <person name="Malarme K."/>
            <person name="Weissenbach J."/>
            <person name="Ehrlich S.D."/>
            <person name="Sorokin A."/>
        </authorList>
    </citation>
    <scope>NUCLEOTIDE SEQUENCE [LARGE SCALE GENOMIC DNA]</scope>
    <source>
        <strain>IL1403</strain>
    </source>
</reference>
<keyword id="KW-0002">3D-structure</keyword>
<keyword id="KW-0226">DNA condensation</keyword>
<keyword id="KW-0238">DNA-binding</keyword>
<keyword id="KW-1185">Reference proteome</keyword>
<gene>
    <name type="primary">hup</name>
    <name type="synonym">hslA</name>
    <name type="ordered locus">LL0502</name>
    <name type="ORF">L102317</name>
</gene>
<name>DBH_LACLA</name>